<reference key="1">
    <citation type="journal article" date="2000" name="FEBS Lett.">
        <title>Characterization of two distinct DP-related genes from Arabidopsis thaliana.</title>
        <authorList>
            <person name="Magyar Z."/>
            <person name="Atanassova A."/>
            <person name="De Veylder L."/>
            <person name="Rombauts S."/>
            <person name="Inze D."/>
        </authorList>
    </citation>
    <scope>NUCLEOTIDE SEQUENCE [MRNA]</scope>
    <scope>INTERACTION WITH E2FA AND E2FB</scope>
    <source>
        <strain>cv. Columbia</strain>
    </source>
</reference>
<reference key="2">
    <citation type="submission" date="2002-01" db="EMBL/GenBank/DDBJ databases">
        <title>E2F family transcription factors: AtE2F-a and AtDP-a, induce Arabidopsis leaf cells to re-enter S phase.</title>
        <authorList>
            <person name="Rossignol P."/>
        </authorList>
    </citation>
    <scope>NUCLEOTIDE SEQUENCE [MRNA]</scope>
    <source>
        <strain>cv. Columbia</strain>
    </source>
</reference>
<reference key="3">
    <citation type="journal article" date="2000" name="Nature">
        <title>Sequence and analysis of chromosome 5 of the plant Arabidopsis thaliana.</title>
        <authorList>
            <person name="Tabata S."/>
            <person name="Kaneko T."/>
            <person name="Nakamura Y."/>
            <person name="Kotani H."/>
            <person name="Kato T."/>
            <person name="Asamizu E."/>
            <person name="Miyajima N."/>
            <person name="Sasamoto S."/>
            <person name="Kimura T."/>
            <person name="Hosouchi T."/>
            <person name="Kawashima K."/>
            <person name="Kohara M."/>
            <person name="Matsumoto M."/>
            <person name="Matsuno A."/>
            <person name="Muraki A."/>
            <person name="Nakayama S."/>
            <person name="Nakazaki N."/>
            <person name="Naruo K."/>
            <person name="Okumura S."/>
            <person name="Shinpo S."/>
            <person name="Takeuchi C."/>
            <person name="Wada T."/>
            <person name="Watanabe A."/>
            <person name="Yamada M."/>
            <person name="Yasuda M."/>
            <person name="Sato S."/>
            <person name="de la Bastide M."/>
            <person name="Huang E."/>
            <person name="Spiegel L."/>
            <person name="Gnoj L."/>
            <person name="O'Shaughnessy A."/>
            <person name="Preston R."/>
            <person name="Habermann K."/>
            <person name="Murray J."/>
            <person name="Johnson D."/>
            <person name="Rohlfing T."/>
            <person name="Nelson J."/>
            <person name="Stoneking T."/>
            <person name="Pepin K."/>
            <person name="Spieth J."/>
            <person name="Sekhon M."/>
            <person name="Armstrong J."/>
            <person name="Becker M."/>
            <person name="Belter E."/>
            <person name="Cordum H."/>
            <person name="Cordes M."/>
            <person name="Courtney L."/>
            <person name="Courtney W."/>
            <person name="Dante M."/>
            <person name="Du H."/>
            <person name="Edwards J."/>
            <person name="Fryman J."/>
            <person name="Haakensen B."/>
            <person name="Lamar E."/>
            <person name="Latreille P."/>
            <person name="Leonard S."/>
            <person name="Meyer R."/>
            <person name="Mulvaney E."/>
            <person name="Ozersky P."/>
            <person name="Riley A."/>
            <person name="Strowmatt C."/>
            <person name="Wagner-McPherson C."/>
            <person name="Wollam A."/>
            <person name="Yoakum M."/>
            <person name="Bell M."/>
            <person name="Dedhia N."/>
            <person name="Parnell L."/>
            <person name="Shah R."/>
            <person name="Rodriguez M."/>
            <person name="Hoon See L."/>
            <person name="Vil D."/>
            <person name="Baker J."/>
            <person name="Kirchoff K."/>
            <person name="Toth K."/>
            <person name="King L."/>
            <person name="Bahret A."/>
            <person name="Miller B."/>
            <person name="Marra M.A."/>
            <person name="Martienssen R."/>
            <person name="McCombie W.R."/>
            <person name="Wilson R.K."/>
            <person name="Murphy G."/>
            <person name="Bancroft I."/>
            <person name="Volckaert G."/>
            <person name="Wambutt R."/>
            <person name="Duesterhoeft A."/>
            <person name="Stiekema W."/>
            <person name="Pohl T."/>
            <person name="Entian K.-D."/>
            <person name="Terryn N."/>
            <person name="Hartley N."/>
            <person name="Bent E."/>
            <person name="Johnson S."/>
            <person name="Langham S.-A."/>
            <person name="McCullagh B."/>
            <person name="Robben J."/>
            <person name="Grymonprez B."/>
            <person name="Zimmermann W."/>
            <person name="Ramsperger U."/>
            <person name="Wedler H."/>
            <person name="Balke K."/>
            <person name="Wedler E."/>
            <person name="Peters S."/>
            <person name="van Staveren M."/>
            <person name="Dirkse W."/>
            <person name="Mooijman P."/>
            <person name="Klein Lankhorst R."/>
            <person name="Weitzenegger T."/>
            <person name="Bothe G."/>
            <person name="Rose M."/>
            <person name="Hauf J."/>
            <person name="Berneiser S."/>
            <person name="Hempel S."/>
            <person name="Feldpausch M."/>
            <person name="Lamberth S."/>
            <person name="Villarroel R."/>
            <person name="Gielen J."/>
            <person name="Ardiles W."/>
            <person name="Bents O."/>
            <person name="Lemcke K."/>
            <person name="Kolesov G."/>
            <person name="Mayer K.F.X."/>
            <person name="Rudd S."/>
            <person name="Schoof H."/>
            <person name="Schueller C."/>
            <person name="Zaccaria P."/>
            <person name="Mewes H.-W."/>
            <person name="Bevan M."/>
            <person name="Fransz P.F."/>
        </authorList>
    </citation>
    <scope>NUCLEOTIDE SEQUENCE [LARGE SCALE GENOMIC DNA]</scope>
    <source>
        <strain>cv. Columbia</strain>
    </source>
</reference>
<reference key="4">
    <citation type="journal article" date="2017" name="Plant J.">
        <title>Araport11: a complete reannotation of the Arabidopsis thaliana reference genome.</title>
        <authorList>
            <person name="Cheng C.Y."/>
            <person name="Krishnakumar V."/>
            <person name="Chan A.P."/>
            <person name="Thibaud-Nissen F."/>
            <person name="Schobel S."/>
            <person name="Town C.D."/>
        </authorList>
    </citation>
    <scope>GENOME REANNOTATION</scope>
    <source>
        <strain>cv. Columbia</strain>
    </source>
</reference>
<reference key="5">
    <citation type="journal article" date="2003" name="Science">
        <title>Empirical analysis of transcriptional activity in the Arabidopsis genome.</title>
        <authorList>
            <person name="Yamada K."/>
            <person name="Lim J."/>
            <person name="Dale J.M."/>
            <person name="Chen H."/>
            <person name="Shinn P."/>
            <person name="Palm C.J."/>
            <person name="Southwick A.M."/>
            <person name="Wu H.C."/>
            <person name="Kim C.J."/>
            <person name="Nguyen M."/>
            <person name="Pham P.K."/>
            <person name="Cheuk R.F."/>
            <person name="Karlin-Newmann G."/>
            <person name="Liu S.X."/>
            <person name="Lam B."/>
            <person name="Sakano H."/>
            <person name="Wu T."/>
            <person name="Yu G."/>
            <person name="Miranda M."/>
            <person name="Quach H.L."/>
            <person name="Tripp M."/>
            <person name="Chang C.H."/>
            <person name="Lee J.M."/>
            <person name="Toriumi M.J."/>
            <person name="Chan M.M."/>
            <person name="Tang C.C."/>
            <person name="Onodera C.S."/>
            <person name="Deng J.M."/>
            <person name="Akiyama K."/>
            <person name="Ansari Y."/>
            <person name="Arakawa T."/>
            <person name="Banh J."/>
            <person name="Banno F."/>
            <person name="Bowser L."/>
            <person name="Brooks S.Y."/>
            <person name="Carninci P."/>
            <person name="Chao Q."/>
            <person name="Choy N."/>
            <person name="Enju A."/>
            <person name="Goldsmith A.D."/>
            <person name="Gurjal M."/>
            <person name="Hansen N.F."/>
            <person name="Hayashizaki Y."/>
            <person name="Johnson-Hopson C."/>
            <person name="Hsuan V.W."/>
            <person name="Iida K."/>
            <person name="Karnes M."/>
            <person name="Khan S."/>
            <person name="Koesema E."/>
            <person name="Ishida J."/>
            <person name="Jiang P.X."/>
            <person name="Jones T."/>
            <person name="Kawai J."/>
            <person name="Kamiya A."/>
            <person name="Meyers C."/>
            <person name="Nakajima M."/>
            <person name="Narusaka M."/>
            <person name="Seki M."/>
            <person name="Sakurai T."/>
            <person name="Satou M."/>
            <person name="Tamse R."/>
            <person name="Vaysberg M."/>
            <person name="Wallender E.K."/>
            <person name="Wong C."/>
            <person name="Yamamura Y."/>
            <person name="Yuan S."/>
            <person name="Shinozaki K."/>
            <person name="Davis R.W."/>
            <person name="Theologis A."/>
            <person name="Ecker J.R."/>
        </authorList>
    </citation>
    <scope>NUCLEOTIDE SEQUENCE [LARGE SCALE MRNA]</scope>
    <source>
        <strain>cv. Columbia</strain>
    </source>
</reference>
<reference key="6">
    <citation type="journal article" date="2002" name="Science">
        <title>Functional annotation of a full-length Arabidopsis cDNA collection.</title>
        <authorList>
            <person name="Seki M."/>
            <person name="Narusaka M."/>
            <person name="Kamiya A."/>
            <person name="Ishida J."/>
            <person name="Satou M."/>
            <person name="Sakurai T."/>
            <person name="Nakajima M."/>
            <person name="Enju A."/>
            <person name="Akiyama K."/>
            <person name="Oono Y."/>
            <person name="Muramatsu M."/>
            <person name="Hayashizaki Y."/>
            <person name="Kawai J."/>
            <person name="Carninci P."/>
            <person name="Itoh M."/>
            <person name="Ishii Y."/>
            <person name="Arakawa T."/>
            <person name="Shibata K."/>
            <person name="Shinagawa A."/>
            <person name="Shinozaki K."/>
        </authorList>
    </citation>
    <scope>NUCLEOTIDE SEQUENCE [LARGE SCALE MRNA]</scope>
    <source>
        <strain>cv. Columbia</strain>
    </source>
</reference>
<reference key="7">
    <citation type="journal article" date="2001" name="Plant Mol. Biol.">
        <title>Arabidopsis E2F1 binds a sequence present in the promoter of S-phase-regulated gene AtCDC6 and is a member of a multigene family with differential activities.</title>
        <authorList>
            <person name="de Jager S.M."/>
            <person name="Menges M."/>
            <person name="Bauer U.M."/>
            <person name="Murra J.A."/>
        </authorList>
    </citation>
    <scope>DEVELOPMENTAL STAGE</scope>
</reference>
<reference key="8">
    <citation type="journal article" date="2002" name="EMBO J.">
        <title>Control of proliferation, endoreduplication and differentiation by the Arabidopsis E2Fa-DPa transcription factor.</title>
        <authorList>
            <person name="De Veylder L."/>
            <person name="Beeckman T."/>
            <person name="Beemster G.T."/>
            <person name="de Almeida Engler J."/>
            <person name="Ormenese S."/>
            <person name="Maes S."/>
            <person name="Naudts M."/>
            <person name="Van Der Schueren E."/>
            <person name="Jacqmard A."/>
            <person name="Engler G."/>
            <person name="Inze D."/>
        </authorList>
    </citation>
    <scope>FUNCTION</scope>
    <scope>TISSUE SPECIFICITY</scope>
</reference>
<reference key="9">
    <citation type="journal article" date="2002" name="J. Biol. Chem.">
        <title>The E2F family of transcription factors from Arabidopsis thaliana. Novel and conserved components of the retinoblastoma/E2F pathway in plants.</title>
        <authorList>
            <person name="Mariconti L."/>
            <person name="Pellegrini B."/>
            <person name="Cantoni R."/>
            <person name="Stevens R."/>
            <person name="Bergounioux C."/>
            <person name="Cella R."/>
            <person name="Albani D."/>
        </authorList>
    </citation>
    <scope>INTERACTION WITH E2FA; E2FB AND E2FC</scope>
    <scope>GENE FAMILY</scope>
    <scope>NOMENCLATURE</scope>
</reference>
<reference key="10">
    <citation type="journal article" date="2002" name="Plant Physiol.">
        <title>Interaction of the Arabidopsis E2F and DP proteins confers their concomitant nuclear translocation and transactivation.</title>
        <authorList>
            <person name="Kosugi S."/>
            <person name="Ohashi Y."/>
        </authorList>
    </citation>
    <scope>FUNCTION</scope>
    <scope>INTERACTION WITH E2FA; E2FB AND E2FC</scope>
    <scope>SUBCELLULAR LOCATION</scope>
</reference>
<reference key="11">
    <citation type="journal article" date="2013" name="Plant Physiol.">
        <title>EBE, an AP2/ERF transcription factor highly expressed in proliferating cells, affects shoot architecture in Arabidopsis.</title>
        <authorList>
            <person name="Mehrnia M."/>
            <person name="Balazadeh S."/>
            <person name="Zanor M.I."/>
            <person name="Mueller-Roeber B."/>
        </authorList>
    </citation>
    <scope>INDUCTION BY ERF114</scope>
</reference>
<proteinExistence type="evidence at protein level"/>
<sequence length="292" mass="33038">MSMEMELFVTPEKQRQHPSVSVEKTPVRRKLIVDDDSEIGSEKKGQSRTSGGGLRQFSVMVCQKLEAKKITTYKEVADEIISDFATIKQNAEKPLNENEYNEKNIRRRVYDALNVFMALDIIARDKKEIRWKGLPITCKKDVEEVKMDRNKVMSSVQKKAAFLKELREKVSSLESLMSRNQEMVVKTQGPAEGFTLPFILLETNPHAVVEIEISEDMQLVHLDFNSTPFSVHDDAYILKLMQEQKQEQNRVSSSSSTHHQSQHSSAHSSSSSCIASGTSGPVCWNSGSIDTR</sequence>
<keyword id="KW-0010">Activator</keyword>
<keyword id="KW-0131">Cell cycle</keyword>
<keyword id="KW-0175">Coiled coil</keyword>
<keyword id="KW-0963">Cytoplasm</keyword>
<keyword id="KW-0238">DNA-binding</keyword>
<keyword id="KW-0539">Nucleus</keyword>
<keyword id="KW-1185">Reference proteome</keyword>
<keyword id="KW-0804">Transcription</keyword>
<keyword id="KW-0805">Transcription regulation</keyword>
<evidence type="ECO:0000250" key="1"/>
<evidence type="ECO:0000255" key="2"/>
<evidence type="ECO:0000256" key="3">
    <source>
        <dbReference type="SAM" id="MobiDB-lite"/>
    </source>
</evidence>
<evidence type="ECO:0000269" key="4">
    <source>
    </source>
</evidence>
<evidence type="ECO:0000269" key="5">
    <source>
    </source>
</evidence>
<evidence type="ECO:0000269" key="6">
    <source>
    </source>
</evidence>
<evidence type="ECO:0000269" key="7">
    <source>
    </source>
</evidence>
<evidence type="ECO:0000269" key="8">
    <source>
    </source>
</evidence>
<evidence type="ECO:0000269" key="9">
    <source>
    </source>
</evidence>
<evidence type="ECO:0000305" key="10"/>
<accession>Q9FNY3</accession>
<accession>Q9LZ55</accession>
<organism>
    <name type="scientific">Arabidopsis thaliana</name>
    <name type="common">Mouse-ear cress</name>
    <dbReference type="NCBI Taxonomy" id="3702"/>
    <lineage>
        <taxon>Eukaryota</taxon>
        <taxon>Viridiplantae</taxon>
        <taxon>Streptophyta</taxon>
        <taxon>Embryophyta</taxon>
        <taxon>Tracheophyta</taxon>
        <taxon>Spermatophyta</taxon>
        <taxon>Magnoliopsida</taxon>
        <taxon>eudicotyledons</taxon>
        <taxon>Gunneridae</taxon>
        <taxon>Pentapetalae</taxon>
        <taxon>rosids</taxon>
        <taxon>malvids</taxon>
        <taxon>Brassicales</taxon>
        <taxon>Brassicaceae</taxon>
        <taxon>Camelineae</taxon>
        <taxon>Arabidopsis</taxon>
    </lineage>
</organism>
<dbReference type="EMBL" id="AJ294531">
    <property type="protein sequence ID" value="CAC15483.1"/>
    <property type="molecule type" value="mRNA"/>
</dbReference>
<dbReference type="EMBL" id="AJ319027">
    <property type="protein sequence ID" value="CAC87459.1"/>
    <property type="molecule type" value="mRNA"/>
</dbReference>
<dbReference type="EMBL" id="AL162971">
    <property type="protein sequence ID" value="CAB85984.1"/>
    <property type="status" value="ALT_INIT"/>
    <property type="molecule type" value="Genomic_DNA"/>
</dbReference>
<dbReference type="EMBL" id="CP002688">
    <property type="protein sequence ID" value="AED90475.1"/>
    <property type="molecule type" value="Genomic_DNA"/>
</dbReference>
<dbReference type="EMBL" id="CP002688">
    <property type="protein sequence ID" value="AED90476.1"/>
    <property type="molecule type" value="Genomic_DNA"/>
</dbReference>
<dbReference type="EMBL" id="CP002688">
    <property type="protein sequence ID" value="AED90477.1"/>
    <property type="molecule type" value="Genomic_DNA"/>
</dbReference>
<dbReference type="EMBL" id="BT005286">
    <property type="protein sequence ID" value="AAO63350.1"/>
    <property type="molecule type" value="mRNA"/>
</dbReference>
<dbReference type="EMBL" id="AK117135">
    <property type="protein sequence ID" value="BAC41813.1"/>
    <property type="molecule type" value="mRNA"/>
</dbReference>
<dbReference type="PIR" id="T48268">
    <property type="entry name" value="T48268"/>
</dbReference>
<dbReference type="RefSeq" id="NP_195867.2">
    <property type="nucleotide sequence ID" value="NM_120325.4"/>
</dbReference>
<dbReference type="RefSeq" id="NP_851027.1">
    <property type="nucleotide sequence ID" value="NM_180696.2"/>
</dbReference>
<dbReference type="RefSeq" id="NP_851028.1">
    <property type="nucleotide sequence ID" value="NM_180697.3"/>
</dbReference>
<dbReference type="SMR" id="Q9FNY3"/>
<dbReference type="BioGRID" id="16265">
    <property type="interactions" value="23"/>
</dbReference>
<dbReference type="FunCoup" id="Q9FNY3">
    <property type="interactions" value="2101"/>
</dbReference>
<dbReference type="IntAct" id="Q9FNY3">
    <property type="interactions" value="11"/>
</dbReference>
<dbReference type="MINT" id="Q9FNY3"/>
<dbReference type="STRING" id="3702.Q9FNY3"/>
<dbReference type="iPTMnet" id="Q9FNY3"/>
<dbReference type="PaxDb" id="3702-AT5G02470.2"/>
<dbReference type="ProteomicsDB" id="220293"/>
<dbReference type="EnsemblPlants" id="AT5G02470.1">
    <property type="protein sequence ID" value="AT5G02470.1"/>
    <property type="gene ID" value="AT5G02470"/>
</dbReference>
<dbReference type="EnsemblPlants" id="AT5G02470.2">
    <property type="protein sequence ID" value="AT5G02470.2"/>
    <property type="gene ID" value="AT5G02470"/>
</dbReference>
<dbReference type="EnsemblPlants" id="AT5G02470.3">
    <property type="protein sequence ID" value="AT5G02470.3"/>
    <property type="gene ID" value="AT5G02470"/>
</dbReference>
<dbReference type="GeneID" id="830987"/>
<dbReference type="Gramene" id="AT5G02470.1">
    <property type="protein sequence ID" value="AT5G02470.1"/>
    <property type="gene ID" value="AT5G02470"/>
</dbReference>
<dbReference type="Gramene" id="AT5G02470.2">
    <property type="protein sequence ID" value="AT5G02470.2"/>
    <property type="gene ID" value="AT5G02470"/>
</dbReference>
<dbReference type="Gramene" id="AT5G02470.3">
    <property type="protein sequence ID" value="AT5G02470.3"/>
    <property type="gene ID" value="AT5G02470"/>
</dbReference>
<dbReference type="KEGG" id="ath:AT5G02470"/>
<dbReference type="Araport" id="AT5G02470"/>
<dbReference type="TAIR" id="AT5G02470">
    <property type="gene designation" value="DPA"/>
</dbReference>
<dbReference type="eggNOG" id="KOG2829">
    <property type="taxonomic scope" value="Eukaryota"/>
</dbReference>
<dbReference type="HOGENOM" id="CLU_039874_4_0_1"/>
<dbReference type="InParanoid" id="Q9FNY3"/>
<dbReference type="OMA" id="YPPFRPC"/>
<dbReference type="PhylomeDB" id="Q9FNY3"/>
<dbReference type="PRO" id="PR:Q9FNY3"/>
<dbReference type="Proteomes" id="UP000006548">
    <property type="component" value="Chromosome 5"/>
</dbReference>
<dbReference type="ExpressionAtlas" id="Q9FNY3">
    <property type="expression patterns" value="baseline and differential"/>
</dbReference>
<dbReference type="GO" id="GO:0005737">
    <property type="term" value="C:cytoplasm"/>
    <property type="evidence" value="ECO:0007669"/>
    <property type="project" value="UniProtKB-SubCell"/>
</dbReference>
<dbReference type="GO" id="GO:0070176">
    <property type="term" value="C:DRM complex"/>
    <property type="evidence" value="ECO:0000314"/>
    <property type="project" value="TAIR"/>
</dbReference>
<dbReference type="GO" id="GO:0003677">
    <property type="term" value="F:DNA binding"/>
    <property type="evidence" value="ECO:0007669"/>
    <property type="project" value="UniProtKB-KW"/>
</dbReference>
<dbReference type="GO" id="GO:0003700">
    <property type="term" value="F:DNA-binding transcription factor activity"/>
    <property type="evidence" value="ECO:0000250"/>
    <property type="project" value="TAIR"/>
</dbReference>
<dbReference type="GO" id="GO:0051726">
    <property type="term" value="P:regulation of cell cycle"/>
    <property type="evidence" value="ECO:0007669"/>
    <property type="project" value="InterPro"/>
</dbReference>
<dbReference type="CDD" id="cd14458">
    <property type="entry name" value="DP_DD"/>
    <property type="match status" value="1"/>
</dbReference>
<dbReference type="FunFam" id="1.20.140.80:FF:000004">
    <property type="entry name" value="Transcription factor-like protein DPA"/>
    <property type="match status" value="1"/>
</dbReference>
<dbReference type="FunFam" id="1.10.10.10:FF:000187">
    <property type="entry name" value="Transcription factor-like protein DPB"/>
    <property type="match status" value="1"/>
</dbReference>
<dbReference type="Gene3D" id="1.20.140.80">
    <property type="entry name" value="Transcription factor DP"/>
    <property type="match status" value="1"/>
</dbReference>
<dbReference type="Gene3D" id="1.10.10.10">
    <property type="entry name" value="Winged helix-like DNA-binding domain superfamily/Winged helix DNA-binding domain"/>
    <property type="match status" value="1"/>
</dbReference>
<dbReference type="InterPro" id="IPR037241">
    <property type="entry name" value="E2F-DP_heterodim"/>
</dbReference>
<dbReference type="InterPro" id="IPR003316">
    <property type="entry name" value="E2F_WHTH_DNA-bd_dom"/>
</dbReference>
<dbReference type="InterPro" id="IPR038168">
    <property type="entry name" value="TF_DP_C_sf"/>
</dbReference>
<dbReference type="InterPro" id="IPR014889">
    <property type="entry name" value="Transc_factor_DP_C"/>
</dbReference>
<dbReference type="InterPro" id="IPR015648">
    <property type="entry name" value="Transcrpt_fac_DP"/>
</dbReference>
<dbReference type="InterPro" id="IPR036388">
    <property type="entry name" value="WH-like_DNA-bd_sf"/>
</dbReference>
<dbReference type="InterPro" id="IPR036390">
    <property type="entry name" value="WH_DNA-bd_sf"/>
</dbReference>
<dbReference type="PANTHER" id="PTHR12548">
    <property type="entry name" value="TRANSCRIPTION FACTOR DP"/>
    <property type="match status" value="1"/>
</dbReference>
<dbReference type="PANTHER" id="PTHR12548:SF19">
    <property type="entry name" value="TRANSCRIPTION FACTOR-LIKE PROTEIN DPA"/>
    <property type="match status" value="1"/>
</dbReference>
<dbReference type="Pfam" id="PF08781">
    <property type="entry name" value="DP"/>
    <property type="match status" value="1"/>
</dbReference>
<dbReference type="Pfam" id="PF02319">
    <property type="entry name" value="E2F_TDP"/>
    <property type="match status" value="1"/>
</dbReference>
<dbReference type="PIRSF" id="PIRSF009404">
    <property type="entry name" value="Transcription_factor_DP"/>
    <property type="match status" value="1"/>
</dbReference>
<dbReference type="SMART" id="SM01138">
    <property type="entry name" value="DP"/>
    <property type="match status" value="1"/>
</dbReference>
<dbReference type="SMART" id="SM01372">
    <property type="entry name" value="E2F_TDP"/>
    <property type="match status" value="1"/>
</dbReference>
<dbReference type="SUPFAM" id="SSF144074">
    <property type="entry name" value="E2F-DP heterodimerization region"/>
    <property type="match status" value="1"/>
</dbReference>
<dbReference type="SUPFAM" id="SSF46785">
    <property type="entry name" value="Winged helix' DNA-binding domain"/>
    <property type="match status" value="1"/>
</dbReference>
<protein>
    <recommendedName>
        <fullName>Transcription factor-like protein DPA</fullName>
    </recommendedName>
    <alternativeName>
        <fullName>DP-like protein A</fullName>
        <shortName>AtDPbA</shortName>
    </alternativeName>
    <alternativeName>
        <fullName>E2F dimerization partner protein A</fullName>
        <shortName>AtDP2a</shortName>
    </alternativeName>
</protein>
<name>DPA_ARATH</name>
<comment type="function">
    <text evidence="7 8">Involved in the regulation of the G1/S transition. Increases the DNA binding and the transactivation activities of E2F proteins after heterodimerization. The complex DPA/E2FA promotes cell division and acts as a regulator of the endocycle. Positively regulates the activity of S phase-specific genes.</text>
</comment>
<comment type="subunit">
    <text evidence="4 6 8">Heterodimer with E2F. Interacts preferentially with E2FA and E2FB, but also with E2FC.</text>
</comment>
<comment type="interaction">
    <interactant intactId="EBI-1774763">
        <id>Q9FNY3</id>
    </interactant>
    <interactant intactId="EBI-1774747">
        <id>Q9FNY0</id>
        <label>E2FA</label>
    </interactant>
    <organismsDiffer>false</organismsDiffer>
    <experiments>6</experiments>
</comment>
<comment type="interaction">
    <interactant intactId="EBI-1774763">
        <id>Q9FNY3</id>
    </interactant>
    <interactant intactId="EBI-1774719">
        <id>Q9FV71</id>
        <label>E2FB</label>
    </interactant>
    <organismsDiffer>false</organismsDiffer>
    <experiments>10</experiments>
</comment>
<comment type="subcellular location">
    <subcellularLocation>
        <location evidence="8">Cytoplasm</location>
    </subcellularLocation>
    <subcellularLocation>
        <location evidence="8">Nucleus</location>
    </subcellularLocation>
    <text>Interaction with E2F stimulates the nuclear translocation.</text>
</comment>
<comment type="tissue specificity">
    <text evidence="7">Strongly expressed in the actively dividing tissues of the shoot apical meristem, young leaf primordia, the vascular tissues of the maturing leaf primordia and axillary buds.</text>
</comment>
<comment type="developmental stage">
    <text evidence="5">Expressed in a cell cycle-dependent manner. Low expression at the G1/S transition and increases during the S phase. S/G2 transitions.</text>
</comment>
<comment type="induction">
    <text evidence="9">Up-regulated by the transcription factor ERF114.</text>
</comment>
<comment type="domain">
    <text>The DIM domain (143-214) is necessary but not sufficient for heterodimerization.</text>
</comment>
<comment type="similarity">
    <text evidence="10">Belongs to the E2F/DP family.</text>
</comment>
<comment type="sequence caution" evidence="10">
    <conflict type="erroneous initiation">
        <sequence resource="EMBL-CDS" id="CAB85984"/>
    </conflict>
    <text>Truncated N-terminus.</text>
</comment>
<feature type="chain" id="PRO_0000405866" description="Transcription factor-like protein DPA">
    <location>
        <begin position="1"/>
        <end position="292"/>
    </location>
</feature>
<feature type="DNA-binding region" evidence="2">
    <location>
        <begin position="51"/>
        <end position="135"/>
    </location>
</feature>
<feature type="region of interest" description="Disordered" evidence="3">
    <location>
        <begin position="1"/>
        <end position="25"/>
    </location>
</feature>
<feature type="region of interest" description="Disordered" evidence="3">
    <location>
        <begin position="246"/>
        <end position="280"/>
    </location>
</feature>
<feature type="coiled-coil region" evidence="2">
    <location>
        <begin position="163"/>
        <end position="184"/>
    </location>
</feature>
<feature type="short sequence motif" description="DEF box" evidence="1">
    <location>
        <begin position="101"/>
        <end position="135"/>
    </location>
</feature>
<feature type="compositionally biased region" description="Low complexity" evidence="3">
    <location>
        <begin position="252"/>
        <end position="280"/>
    </location>
</feature>
<gene>
    <name type="primary">DPA</name>
    <name type="synonym">DP2</name>
    <name type="synonym">DP2A</name>
    <name type="ordered locus">At5g02470</name>
    <name type="ORF">T22P11.60</name>
</gene>